<accession>P20606</accession>
<accession>D6W3F2</accession>
<sequence>MAGWDIFGWFRDVLASLGLWNKHGKLLFLGLDNAGKTTLLHMLKNDRLATLQPTWHPTSEELAIGNIKFTTFDLGGHIQARRLWKDYFPEVNGIVFLVDAADPERFDEARVELDALFNIAELKDVPFVILGNKIDAPNAVSEAELRSALGLLNTTGSQRIEGQRPVEVFMCSVVMRNGYLEAFQWLSQYI</sequence>
<comment type="function">
    <text evidence="1 2 5 6 7 8 9 10 12 15 16 18 19 22">Small GTPase component of the coat protein complex II (COPII) which promotes the formation of transport vesicles from the endoplasmic reticulum (ER). The coat has two main functions, the physical deformation of the endoplasmic reticulum membrane into vesicles and the selection of cargo molecules. SAR1 controls the coat assembly in a stepwise manner. Activated SAR1-GTP by SEC12 binds to membranes first and recruits the SEC23/24 complex. These SEC23/24-SAR1 prebudding intermediates are then collected by the SEC13/31 complex as subunits polymerize to form coated transport vesicles. Conversion to SAR1-GDP triggers coat release and recycles COPII subunits.</text>
</comment>
<comment type="catalytic activity">
    <reaction evidence="13 22">
        <text>GTP + H2O = GDP + phosphate + H(+)</text>
        <dbReference type="Rhea" id="RHEA:19669"/>
        <dbReference type="ChEBI" id="CHEBI:15377"/>
        <dbReference type="ChEBI" id="CHEBI:15378"/>
        <dbReference type="ChEBI" id="CHEBI:37565"/>
        <dbReference type="ChEBI" id="CHEBI:43474"/>
        <dbReference type="ChEBI" id="CHEBI:58189"/>
    </reaction>
    <physiologicalReaction direction="left-to-right" evidence="24 25">
        <dbReference type="Rhea" id="RHEA:19670"/>
    </physiologicalReaction>
</comment>
<comment type="subunit">
    <text evidence="2 3 4 14 20 21">COPII is composed of at least 5 proteins: the SEC23/24 complex, the SEC13/31 complex and SAR1. Interacts with EMP24.</text>
</comment>
<comment type="interaction">
    <interactant intactId="EBI-16472">
        <id>P20606</id>
    </interactant>
    <interactant intactId="EBI-16584">
        <id>P15303</id>
        <label>SEC23</label>
    </interactant>
    <organismsDiffer>false</organismsDiffer>
    <experiments>3</experiments>
</comment>
<comment type="subcellular location">
    <subcellularLocation>
        <location>Cytoplasmic vesicle</location>
        <location>COPII-coated vesicle membrane</location>
        <topology>Peripheral membrane protein</topology>
        <orientation>Cytoplasmic side</orientation>
    </subcellularLocation>
    <subcellularLocation>
        <location>Endoplasmic reticulum membrane</location>
        <topology>Peripheral membrane protein</topology>
        <orientation>Cytoplasmic side</orientation>
    </subcellularLocation>
    <subcellularLocation>
        <location evidence="23">Golgi apparatus membrane</location>
        <topology evidence="23">Peripheral membrane protein</topology>
        <orientation evidence="23">Cytoplasmic side</orientation>
    </subcellularLocation>
    <text>Membrane association requires the presence of the SEC12 exchange factor.</text>
</comment>
<comment type="similarity">
    <text evidence="23">Belongs to the small GTPase superfamily. SAR1 family.</text>
</comment>
<feature type="chain" id="PRO_0000206275" description="Small COPII coat GTPase SAR1">
    <location>
        <begin position="1"/>
        <end position="190"/>
    </location>
</feature>
<feature type="binding site">
    <location>
        <begin position="30"/>
        <end position="37"/>
    </location>
    <ligand>
        <name>GTP</name>
        <dbReference type="ChEBI" id="CHEBI:37565"/>
    </ligand>
</feature>
<feature type="binding site">
    <location>
        <begin position="73"/>
        <end position="76"/>
    </location>
    <ligand>
        <name>GTP</name>
        <dbReference type="ChEBI" id="CHEBI:37565"/>
    </ligand>
</feature>
<feature type="binding site">
    <location>
        <begin position="132"/>
        <end position="135"/>
    </location>
    <ligand>
        <name>GTP</name>
        <dbReference type="ChEBI" id="CHEBI:37565"/>
    </ligand>
</feature>
<feature type="modified residue" description="Phosphothreonine" evidence="27">
    <location>
        <position position="155"/>
    </location>
</feature>
<feature type="modified residue" description="Phosphoserine" evidence="26 27">
    <location>
        <position position="157"/>
    </location>
</feature>
<feature type="cross-link" description="Glycyl lysine isopeptide (Lys-Gly) (interchain with G-Cter in ubiquitin)" evidence="28">
    <location>
        <position position="133"/>
    </location>
</feature>
<feature type="mutagenesis site" description="No cell growth at 37 degrees Celsius. Decreases GTP binding and ER-to-Golgi vesicle transport." evidence="11 17 22">
    <original>D</original>
    <variation>G</variation>
    <location>
        <position position="32"/>
    </location>
</feature>
<feature type="mutagenesis site" description="No cell growth at 23 or 37 degrees Celsius." evidence="11">
    <original>K</original>
    <variation>M</variation>
    <location>
        <position position="36"/>
    </location>
</feature>
<feature type="mutagenesis site" description="No cell growth at 23 or 37 degrees Celsius. Decreases GTP binding and impairs ER-to-Golgi vesicle transport." evidence="11 22">
    <original>T</original>
    <variation>A</variation>
    <location>
        <position position="54"/>
    </location>
</feature>
<feature type="mutagenesis site" description="No cell growth at 23 or 37 degrees Celsius." evidence="11">
    <original>D</original>
    <variation>V</variation>
    <location>
        <position position="73"/>
    </location>
</feature>
<feature type="mutagenesis site" description="No cell growth at 23 or 37 degrees Celsius. Impairs ER-to-Golgi vesicle transport." evidence="11 22">
    <original>H</original>
    <variation>L</variation>
    <location>
        <position position="77"/>
    </location>
</feature>
<feature type="mutagenesis site" description="Decreases guanine nucleotide binding." evidence="17 22">
    <original>E</original>
    <variation>K</variation>
    <location>
        <position position="112"/>
    </location>
</feature>
<feature type="mutagenesis site" description="No cell growth at 37 degrees Celsius." evidence="11 17">
    <original>N</original>
    <variation>I</variation>
    <location>
        <position position="132"/>
    </location>
</feature>
<feature type="mutagenesis site" description="Normal cell growth." evidence="11">
    <original>C</original>
    <variation>S</variation>
    <location>
        <position position="171"/>
    </location>
</feature>
<feature type="strand" evidence="31">
    <location>
        <begin position="25"/>
        <end position="30"/>
    </location>
</feature>
<feature type="helix" evidence="31">
    <location>
        <begin position="36"/>
        <end position="45"/>
    </location>
</feature>
<feature type="strand" evidence="29">
    <location>
        <begin position="58"/>
        <end position="64"/>
    </location>
</feature>
<feature type="strand" evidence="31">
    <location>
        <begin position="70"/>
        <end position="72"/>
    </location>
</feature>
<feature type="helix" evidence="31">
    <location>
        <begin position="77"/>
        <end position="86"/>
    </location>
</feature>
<feature type="strand" evidence="31">
    <location>
        <begin position="92"/>
        <end position="99"/>
    </location>
</feature>
<feature type="helix" evidence="31">
    <location>
        <begin position="103"/>
        <end position="105"/>
    </location>
</feature>
<feature type="helix" evidence="31">
    <location>
        <begin position="106"/>
        <end position="117"/>
    </location>
</feature>
<feature type="helix" evidence="31">
    <location>
        <begin position="120"/>
        <end position="122"/>
    </location>
</feature>
<feature type="strand" evidence="31">
    <location>
        <begin position="127"/>
        <end position="132"/>
    </location>
</feature>
<feature type="strand" evidence="30">
    <location>
        <begin position="136"/>
        <end position="138"/>
    </location>
</feature>
<feature type="helix" evidence="31">
    <location>
        <begin position="142"/>
        <end position="149"/>
    </location>
</feature>
<feature type="strand" evidence="31">
    <location>
        <begin position="166"/>
        <end position="170"/>
    </location>
</feature>
<feature type="turn" evidence="31">
    <location>
        <begin position="173"/>
        <end position="176"/>
    </location>
</feature>
<feature type="helix" evidence="31">
    <location>
        <begin position="179"/>
        <end position="190"/>
    </location>
</feature>
<proteinExistence type="evidence at protein level"/>
<dbReference type="EC" id="3.6.5.-" evidence="13 22"/>
<dbReference type="EMBL" id="X51667">
    <property type="protein sequence ID" value="CAA35978.1"/>
    <property type="molecule type" value="Genomic_DNA"/>
</dbReference>
<dbReference type="EMBL" id="Z73574">
    <property type="protein sequence ID" value="CAA97933.1"/>
    <property type="molecule type" value="Genomic_DNA"/>
</dbReference>
<dbReference type="EMBL" id="BK006949">
    <property type="protein sequence ID" value="DAA11218.1"/>
    <property type="molecule type" value="Genomic_DNA"/>
</dbReference>
<dbReference type="PIR" id="A33619">
    <property type="entry name" value="A33619"/>
</dbReference>
<dbReference type="RefSeq" id="NP_015106.1">
    <property type="nucleotide sequence ID" value="NM_001184032.1"/>
</dbReference>
<dbReference type="PDB" id="1M2O">
    <property type="method" value="X-ray"/>
    <property type="resolution" value="2.50 A"/>
    <property type="chains" value="B/D=1-190"/>
</dbReference>
<dbReference type="PDB" id="2QTV">
    <property type="method" value="X-ray"/>
    <property type="resolution" value="2.50 A"/>
    <property type="chains" value="B=23-189"/>
</dbReference>
<dbReference type="PDB" id="4BZI">
    <property type="method" value="EM"/>
    <property type="resolution" value="23.00 A"/>
    <property type="chains" value="B/J/K=1-190"/>
</dbReference>
<dbReference type="PDB" id="6GNI">
    <property type="method" value="EM"/>
    <property type="resolution" value="4.90 A"/>
    <property type="chains" value="B=23-189"/>
</dbReference>
<dbReference type="PDB" id="6X90">
    <property type="method" value="X-ray"/>
    <property type="resolution" value="2.26 A"/>
    <property type="chains" value="A=24-190"/>
</dbReference>
<dbReference type="PDB" id="6ZGA">
    <property type="method" value="EM"/>
    <property type="resolution" value="4.60 A"/>
    <property type="chains" value="C=1-190, G=1-189"/>
</dbReference>
<dbReference type="PDB" id="8BSH">
    <property type="method" value="EM"/>
    <property type="resolution" value="3.80 A"/>
    <property type="chains" value="B=1-190"/>
</dbReference>
<dbReference type="PDBsum" id="1M2O"/>
<dbReference type="PDBsum" id="2QTV"/>
<dbReference type="PDBsum" id="4BZI"/>
<dbReference type="PDBsum" id="6GNI"/>
<dbReference type="PDBsum" id="6X90"/>
<dbReference type="PDBsum" id="6ZGA"/>
<dbReference type="PDBsum" id="8BSH"/>
<dbReference type="EMDB" id="EMD-0044"/>
<dbReference type="EMDB" id="EMD-11199"/>
<dbReference type="SMR" id="P20606"/>
<dbReference type="BioGRID" id="35967">
    <property type="interactions" value="94"/>
</dbReference>
<dbReference type="ComplexPortal" id="CPX-2523">
    <property type="entry name" value="COPII vesicle coat complex"/>
</dbReference>
<dbReference type="DIP" id="DIP-2231N"/>
<dbReference type="FunCoup" id="P20606">
    <property type="interactions" value="1150"/>
</dbReference>
<dbReference type="IntAct" id="P20606">
    <property type="interactions" value="18"/>
</dbReference>
<dbReference type="MINT" id="P20606"/>
<dbReference type="STRING" id="4932.YPL218W"/>
<dbReference type="iPTMnet" id="P20606"/>
<dbReference type="PaxDb" id="4932-YPL218W"/>
<dbReference type="PeptideAtlas" id="P20606"/>
<dbReference type="EnsemblFungi" id="YPL218W_mRNA">
    <property type="protein sequence ID" value="YPL218W"/>
    <property type="gene ID" value="YPL218W"/>
</dbReference>
<dbReference type="GeneID" id="855883"/>
<dbReference type="KEGG" id="sce:YPL218W"/>
<dbReference type="AGR" id="SGD:S000006139"/>
<dbReference type="SGD" id="S000006139">
    <property type="gene designation" value="SAR1"/>
</dbReference>
<dbReference type="VEuPathDB" id="FungiDB:YPL218W"/>
<dbReference type="eggNOG" id="KOG0077">
    <property type="taxonomic scope" value="Eukaryota"/>
</dbReference>
<dbReference type="GeneTree" id="ENSGT00940000171772"/>
<dbReference type="HOGENOM" id="CLU_040729_6_0_1"/>
<dbReference type="InParanoid" id="P20606"/>
<dbReference type="OMA" id="GLWNKHG"/>
<dbReference type="OrthoDB" id="2011769at2759"/>
<dbReference type="BioCyc" id="YEAST:G3O-34107-MONOMER"/>
<dbReference type="Reactome" id="R-SCE-204005">
    <property type="pathway name" value="COPII-mediated vesicle transport"/>
</dbReference>
<dbReference type="Reactome" id="R-SCE-5694530">
    <property type="pathway name" value="Cargo concentration in the ER"/>
</dbReference>
<dbReference type="Reactome" id="R-SCE-983170">
    <property type="pathway name" value="Antigen Presentation: Folding, assembly and peptide loading of class I MHC"/>
</dbReference>
<dbReference type="BioGRID-ORCS" id="855883">
    <property type="hits" value="8 hits in 10 CRISPR screens"/>
</dbReference>
<dbReference type="CD-CODE" id="E03F929F">
    <property type="entry name" value="Stress granule"/>
</dbReference>
<dbReference type="EvolutionaryTrace" id="P20606"/>
<dbReference type="PRO" id="PR:P20606"/>
<dbReference type="Proteomes" id="UP000002311">
    <property type="component" value="Chromosome XVI"/>
</dbReference>
<dbReference type="RNAct" id="P20606">
    <property type="molecule type" value="protein"/>
</dbReference>
<dbReference type="GO" id="GO:0030127">
    <property type="term" value="C:COPII vesicle coat"/>
    <property type="evidence" value="ECO:0000314"/>
    <property type="project" value="SGD"/>
</dbReference>
<dbReference type="GO" id="GO:0005783">
    <property type="term" value="C:endoplasmic reticulum"/>
    <property type="evidence" value="ECO:0000314"/>
    <property type="project" value="ComplexPortal"/>
</dbReference>
<dbReference type="GO" id="GO:0070971">
    <property type="term" value="C:endoplasmic reticulum exit site"/>
    <property type="evidence" value="ECO:0000314"/>
    <property type="project" value="SGD"/>
</dbReference>
<dbReference type="GO" id="GO:0005789">
    <property type="term" value="C:endoplasmic reticulum membrane"/>
    <property type="evidence" value="ECO:0007669"/>
    <property type="project" value="UniProtKB-SubCell"/>
</dbReference>
<dbReference type="GO" id="GO:0000139">
    <property type="term" value="C:Golgi membrane"/>
    <property type="evidence" value="ECO:0007669"/>
    <property type="project" value="UniProtKB-SubCell"/>
</dbReference>
<dbReference type="GO" id="GO:0044233">
    <property type="term" value="C:mitochondria-associated endoplasmic reticulum membrane contact site"/>
    <property type="evidence" value="ECO:0000314"/>
    <property type="project" value="SGD"/>
</dbReference>
<dbReference type="GO" id="GO:0005739">
    <property type="term" value="C:mitochondrion"/>
    <property type="evidence" value="ECO:0007669"/>
    <property type="project" value="GOC"/>
</dbReference>
<dbReference type="GO" id="GO:0005525">
    <property type="term" value="F:GTP binding"/>
    <property type="evidence" value="ECO:0007669"/>
    <property type="project" value="UniProtKB-KW"/>
</dbReference>
<dbReference type="GO" id="GO:0003924">
    <property type="term" value="F:GTPase activity"/>
    <property type="evidence" value="ECO:0000314"/>
    <property type="project" value="SGD"/>
</dbReference>
<dbReference type="GO" id="GO:0006888">
    <property type="term" value="P:endoplasmic reticulum to Golgi vesicle-mediated transport"/>
    <property type="evidence" value="ECO:0000318"/>
    <property type="project" value="GO_Central"/>
</dbReference>
<dbReference type="GO" id="GO:0006886">
    <property type="term" value="P:intracellular protein transport"/>
    <property type="evidence" value="ECO:0007669"/>
    <property type="project" value="InterPro"/>
</dbReference>
<dbReference type="GO" id="GO:0061024">
    <property type="term" value="P:membrane organization"/>
    <property type="evidence" value="ECO:0000315"/>
    <property type="project" value="SGD"/>
</dbReference>
<dbReference type="GO" id="GO:0000266">
    <property type="term" value="P:mitochondrial fission"/>
    <property type="evidence" value="ECO:0000316"/>
    <property type="project" value="SGD"/>
</dbReference>
<dbReference type="GO" id="GO:0007006">
    <property type="term" value="P:mitochondrial membrane organization"/>
    <property type="evidence" value="ECO:0000315"/>
    <property type="project" value="SGD"/>
</dbReference>
<dbReference type="GO" id="GO:0006998">
    <property type="term" value="P:nuclear envelope organization"/>
    <property type="evidence" value="ECO:0000315"/>
    <property type="project" value="SGD"/>
</dbReference>
<dbReference type="GO" id="GO:1902953">
    <property type="term" value="P:positive regulation of ER to Golgi vesicle-mediated transport"/>
    <property type="evidence" value="ECO:0000314"/>
    <property type="project" value="ComplexPortal"/>
</dbReference>
<dbReference type="GO" id="GO:0070863">
    <property type="term" value="P:positive regulation of protein exit from endoplasmic reticulum"/>
    <property type="evidence" value="ECO:0000314"/>
    <property type="project" value="ComplexPortal"/>
</dbReference>
<dbReference type="GO" id="GO:0003400">
    <property type="term" value="P:regulation of COPII vesicle coating"/>
    <property type="evidence" value="ECO:0000314"/>
    <property type="project" value="SGD"/>
</dbReference>
<dbReference type="GO" id="GO:0016050">
    <property type="term" value="P:vesicle organization"/>
    <property type="evidence" value="ECO:0000314"/>
    <property type="project" value="SGD"/>
</dbReference>
<dbReference type="CDD" id="cd00879">
    <property type="entry name" value="Sar1"/>
    <property type="match status" value="1"/>
</dbReference>
<dbReference type="FunFam" id="3.40.50.300:FF:000161">
    <property type="entry name" value="Small COPII coat GTPase"/>
    <property type="match status" value="1"/>
</dbReference>
<dbReference type="Gene3D" id="3.40.50.300">
    <property type="entry name" value="P-loop containing nucleotide triphosphate hydrolases"/>
    <property type="match status" value="1"/>
</dbReference>
<dbReference type="InterPro" id="IPR027417">
    <property type="entry name" value="P-loop_NTPase"/>
</dbReference>
<dbReference type="InterPro" id="IPR005225">
    <property type="entry name" value="Small_GTP-bd"/>
</dbReference>
<dbReference type="InterPro" id="IPR006689">
    <property type="entry name" value="Small_GTPase_ARF/SAR"/>
</dbReference>
<dbReference type="InterPro" id="IPR006687">
    <property type="entry name" value="Small_GTPase_SAR1"/>
</dbReference>
<dbReference type="NCBIfam" id="TIGR00231">
    <property type="entry name" value="small_GTP"/>
    <property type="match status" value="1"/>
</dbReference>
<dbReference type="PANTHER" id="PTHR45684">
    <property type="entry name" value="RE74312P"/>
    <property type="match status" value="1"/>
</dbReference>
<dbReference type="Pfam" id="PF00025">
    <property type="entry name" value="Arf"/>
    <property type="match status" value="1"/>
</dbReference>
<dbReference type="PRINTS" id="PR00328">
    <property type="entry name" value="SAR1GTPBP"/>
</dbReference>
<dbReference type="SMART" id="SM00177">
    <property type="entry name" value="ARF"/>
    <property type="match status" value="1"/>
</dbReference>
<dbReference type="SMART" id="SM00178">
    <property type="entry name" value="SAR"/>
    <property type="match status" value="1"/>
</dbReference>
<dbReference type="SUPFAM" id="SSF52540">
    <property type="entry name" value="P-loop containing nucleoside triphosphate hydrolases"/>
    <property type="match status" value="1"/>
</dbReference>
<dbReference type="PROSITE" id="PS51422">
    <property type="entry name" value="SAR1"/>
    <property type="match status" value="1"/>
</dbReference>
<evidence type="ECO:0000269" key="1">
    <source>
    </source>
</evidence>
<evidence type="ECO:0000269" key="2">
    <source>
    </source>
</evidence>
<evidence type="ECO:0000269" key="3">
    <source>
    </source>
</evidence>
<evidence type="ECO:0000269" key="4">
    <source>
    </source>
</evidence>
<evidence type="ECO:0000269" key="5">
    <source>
    </source>
</evidence>
<evidence type="ECO:0000269" key="6">
    <source>
    </source>
</evidence>
<evidence type="ECO:0000269" key="7">
    <source>
    </source>
</evidence>
<evidence type="ECO:0000269" key="8">
    <source>
    </source>
</evidence>
<evidence type="ECO:0000269" key="9">
    <source>
    </source>
</evidence>
<evidence type="ECO:0000269" key="10">
    <source>
    </source>
</evidence>
<evidence type="ECO:0000269" key="11">
    <source>
    </source>
</evidence>
<evidence type="ECO:0000269" key="12">
    <source>
    </source>
</evidence>
<evidence type="ECO:0000269" key="13">
    <source>
    </source>
</evidence>
<evidence type="ECO:0000269" key="14">
    <source>
    </source>
</evidence>
<evidence type="ECO:0000269" key="15">
    <source>
    </source>
</evidence>
<evidence type="ECO:0000269" key="16">
    <source>
    </source>
</evidence>
<evidence type="ECO:0000269" key="17">
    <source>
    </source>
</evidence>
<evidence type="ECO:0000269" key="18">
    <source>
    </source>
</evidence>
<evidence type="ECO:0000269" key="19">
    <source>
    </source>
</evidence>
<evidence type="ECO:0000269" key="20">
    <source>
    </source>
</evidence>
<evidence type="ECO:0000269" key="21">
    <source>
    </source>
</evidence>
<evidence type="ECO:0000269" key="22">
    <source>
    </source>
</evidence>
<evidence type="ECO:0000305" key="23"/>
<evidence type="ECO:0000305" key="24">
    <source>
    </source>
</evidence>
<evidence type="ECO:0000305" key="25">
    <source>
    </source>
</evidence>
<evidence type="ECO:0007744" key="26">
    <source>
    </source>
</evidence>
<evidence type="ECO:0007744" key="27">
    <source>
    </source>
</evidence>
<evidence type="ECO:0007744" key="28">
    <source>
    </source>
</evidence>
<evidence type="ECO:0007829" key="29">
    <source>
        <dbReference type="PDB" id="1M2O"/>
    </source>
</evidence>
<evidence type="ECO:0007829" key="30">
    <source>
        <dbReference type="PDB" id="2QTV"/>
    </source>
</evidence>
<evidence type="ECO:0007829" key="31">
    <source>
        <dbReference type="PDB" id="6X90"/>
    </source>
</evidence>
<organism>
    <name type="scientific">Saccharomyces cerevisiae (strain ATCC 204508 / S288c)</name>
    <name type="common">Baker's yeast</name>
    <dbReference type="NCBI Taxonomy" id="559292"/>
    <lineage>
        <taxon>Eukaryota</taxon>
        <taxon>Fungi</taxon>
        <taxon>Dikarya</taxon>
        <taxon>Ascomycota</taxon>
        <taxon>Saccharomycotina</taxon>
        <taxon>Saccharomycetes</taxon>
        <taxon>Saccharomycetales</taxon>
        <taxon>Saccharomycetaceae</taxon>
        <taxon>Saccharomyces</taxon>
    </lineage>
</organism>
<protein>
    <recommendedName>
        <fullName>Small COPII coat GTPase SAR1</fullName>
        <ecNumber evidence="13 22">3.6.5.-</ecNumber>
    </recommendedName>
    <alternativeName>
        <fullName>GTP-binding protein SAR1</fullName>
    </alternativeName>
    <alternativeName>
        <fullName>Secretion-associated RAS-related protein 1</fullName>
    </alternativeName>
</protein>
<reference key="1">
    <citation type="journal article" date="1989" name="J. Cell Biol.">
        <title>A novel GTP-binding protein, Sar1p, is involved in transport from the endoplasmic reticulum to the Golgi apparatus.</title>
        <authorList>
            <person name="Nakano A."/>
            <person name="Muramatsu M.-A."/>
        </authorList>
    </citation>
    <scope>NUCLEOTIDE SEQUENCE [GENOMIC DNA]</scope>
    <scope>FUNCTION</scope>
</reference>
<reference key="2">
    <citation type="journal article" date="1997" name="Nature">
        <title>The nucleotide sequence of Saccharomyces cerevisiae chromosome XVI.</title>
        <authorList>
            <person name="Bussey H."/>
            <person name="Storms R.K."/>
            <person name="Ahmed A."/>
            <person name="Albermann K."/>
            <person name="Allen E."/>
            <person name="Ansorge W."/>
            <person name="Araujo R."/>
            <person name="Aparicio A."/>
            <person name="Barrell B.G."/>
            <person name="Badcock K."/>
            <person name="Benes V."/>
            <person name="Botstein D."/>
            <person name="Bowman S."/>
            <person name="Brueckner M."/>
            <person name="Carpenter J."/>
            <person name="Cherry J.M."/>
            <person name="Chung E."/>
            <person name="Churcher C.M."/>
            <person name="Coster F."/>
            <person name="Davis K."/>
            <person name="Davis R.W."/>
            <person name="Dietrich F.S."/>
            <person name="Delius H."/>
            <person name="DiPaolo T."/>
            <person name="Dubois E."/>
            <person name="Duesterhoeft A."/>
            <person name="Duncan M."/>
            <person name="Floeth M."/>
            <person name="Fortin N."/>
            <person name="Friesen J.D."/>
            <person name="Fritz C."/>
            <person name="Goffeau A."/>
            <person name="Hall J."/>
            <person name="Hebling U."/>
            <person name="Heumann K."/>
            <person name="Hilbert H."/>
            <person name="Hillier L.W."/>
            <person name="Hunicke-Smith S."/>
            <person name="Hyman R.W."/>
            <person name="Johnston M."/>
            <person name="Kalman S."/>
            <person name="Kleine K."/>
            <person name="Komp C."/>
            <person name="Kurdi O."/>
            <person name="Lashkari D."/>
            <person name="Lew H."/>
            <person name="Lin A."/>
            <person name="Lin D."/>
            <person name="Louis E.J."/>
            <person name="Marathe R."/>
            <person name="Messenguy F."/>
            <person name="Mewes H.-W."/>
            <person name="Mirtipati S."/>
            <person name="Moestl D."/>
            <person name="Mueller-Auer S."/>
            <person name="Namath A."/>
            <person name="Nentwich U."/>
            <person name="Oefner P."/>
            <person name="Pearson D."/>
            <person name="Petel F.X."/>
            <person name="Pohl T.M."/>
            <person name="Purnelle B."/>
            <person name="Rajandream M.A."/>
            <person name="Rechmann S."/>
            <person name="Rieger M."/>
            <person name="Riles L."/>
            <person name="Roberts D."/>
            <person name="Schaefer M."/>
            <person name="Scharfe M."/>
            <person name="Scherens B."/>
            <person name="Schramm S."/>
            <person name="Schroeder M."/>
            <person name="Sdicu A.-M."/>
            <person name="Tettelin H."/>
            <person name="Urrestarazu L.A."/>
            <person name="Ushinsky S."/>
            <person name="Vierendeels F."/>
            <person name="Vissers S."/>
            <person name="Voss H."/>
            <person name="Walsh S.V."/>
            <person name="Wambutt R."/>
            <person name="Wang Y."/>
            <person name="Wedler E."/>
            <person name="Wedler H."/>
            <person name="Winnett E."/>
            <person name="Zhong W.-W."/>
            <person name="Zollner A."/>
            <person name="Vo D.H."/>
            <person name="Hani J."/>
        </authorList>
    </citation>
    <scope>NUCLEOTIDE SEQUENCE [LARGE SCALE GENOMIC DNA]</scope>
    <source>
        <strain>ATCC 204508 / S288c</strain>
    </source>
</reference>
<reference key="3">
    <citation type="journal article" date="2014" name="G3 (Bethesda)">
        <title>The reference genome sequence of Saccharomyces cerevisiae: Then and now.</title>
        <authorList>
            <person name="Engel S.R."/>
            <person name="Dietrich F.S."/>
            <person name="Fisk D.G."/>
            <person name="Binkley G."/>
            <person name="Balakrishnan R."/>
            <person name="Costanzo M.C."/>
            <person name="Dwight S.S."/>
            <person name="Hitz B.C."/>
            <person name="Karra K."/>
            <person name="Nash R.S."/>
            <person name="Weng S."/>
            <person name="Wong E.D."/>
            <person name="Lloyd P."/>
            <person name="Skrzypek M.S."/>
            <person name="Miyasato S.R."/>
            <person name="Simison M."/>
            <person name="Cherry J.M."/>
        </authorList>
    </citation>
    <scope>GENOME REANNOTATION</scope>
    <source>
        <strain>ATCC 204508 / S288c</strain>
    </source>
</reference>
<reference key="4">
    <citation type="journal article" date="1991" name="Biochim. Biophys. Acta">
        <title>The GTP-binding Sar1 protein is localized to the early compartment of the yeast secretory pathway.</title>
        <authorList>
            <person name="Nishikawa S."/>
            <person name="Nakano A."/>
        </authorList>
    </citation>
    <scope>SUBCELLULAR LOCATION</scope>
</reference>
<reference key="5">
    <citation type="journal article" date="1991" name="J. Cell Biol.">
        <title>Sec12p-dependent membrane binding of the small GTP-binding protein Sar1p promotes formation of transport vesicles from the ER.</title>
        <authorList>
            <person name="d'Enfert C."/>
            <person name="Wuestehube L.J."/>
            <person name="Lila T."/>
            <person name="Schekman R.W."/>
        </authorList>
    </citation>
    <scope>FUNCTION</scope>
    <scope>SUBCELLULAR LOCATION</scope>
</reference>
<reference key="6">
    <citation type="journal article" date="1991" name="J. Cell Biol.">
        <title>Reconstitution of GTP-binding Sar1 protein function in ER to Golgi transport.</title>
        <authorList>
            <person name="Oka T."/>
            <person name="Nishikawa S."/>
            <person name="Nakano A."/>
        </authorList>
    </citation>
    <scope>FUNCTION</scope>
</reference>
<reference key="7">
    <citation type="journal article" date="1991" name="Mol. Cell. Biol.">
        <title>Structural and functional dissection of a membrane glycoprotein required for vesicle budding from the endoplasmic reticulum.</title>
        <authorList>
            <person name="d'Enfert C."/>
            <person name="Barlowe C."/>
            <person name="Nishikawa S."/>
            <person name="Nakano A."/>
            <person name="Schekman R.W."/>
        </authorList>
    </citation>
    <scope>SUBCELLULAR LOCATION</scope>
</reference>
<reference key="8">
    <citation type="journal article" date="1993" name="J. Biol. Chem.">
        <title>Purification and characterization of SAR1p, a small GTP-binding protein required for transport vesicle formation from the endoplasmic reticulum.</title>
        <authorList>
            <person name="Barlowe C."/>
            <person name="d'Enfert C."/>
            <person name="Schekman R.W."/>
        </authorList>
    </citation>
    <scope>CATALYTIC ACTIVITY</scope>
</reference>
<reference key="9">
    <citation type="journal article" date="1993" name="Science">
        <title>Requirement for a GTPase-activating protein in vesicle budding from the endoplasmic reticulum.</title>
        <authorList>
            <person name="Yoshihisa T."/>
            <person name="Barlowe C."/>
            <person name="Schekman R.W."/>
        </authorList>
    </citation>
    <scope>CHARACTERIZATION</scope>
    <scope>ACTIVITY REGULATION</scope>
    <scope>INTERACTION WITH SEC23</scope>
</reference>
<reference key="10">
    <citation type="journal article" date="1994" name="J. Biochem.">
        <title>Mutational analysis of the Sar1 protein, a small GTPase which is essential for vesicular transport from the endoplasmic reticulum.</title>
        <authorList>
            <person name="Nakano A."/>
            <person name="Otsuka H."/>
            <person name="Yamagishi M."/>
            <person name="Yamamoto E."/>
            <person name="Kimura K."/>
            <person name="Nishikawa S."/>
            <person name="Oka T."/>
        </authorList>
    </citation>
    <scope>MUTAGENESIS OF ASP-32; LYS-36; THR-54; ASP-73; HIS-77; ASN-132 AND CYS-171</scope>
</reference>
<reference key="11">
    <citation type="journal article" date="1994" name="J. Cell Biol.">
        <title>Inhibition of GTP hydrolysis by Sar1p causes accumulation of vesicles that are a functional intermediate of the ER-to-Golgi transport in yeast.</title>
        <authorList>
            <person name="Oka T."/>
            <person name="Nakano A."/>
        </authorList>
    </citation>
    <scope>FUNCTION</scope>
    <scope>SUBCELLULAR LOCATION</scope>
</reference>
<reference key="12">
    <citation type="journal article" date="1995" name="Cell">
        <title>COPI- and COPII-coated vesicles bud directly from the endoplasmic reticulum in yeast.</title>
        <authorList>
            <person name="Bednarek S.Y."/>
            <person name="Ravazzola M."/>
            <person name="Hosobuchi M."/>
            <person name="Amherdt M."/>
            <person name="Perrelet A."/>
            <person name="Schekman R.W."/>
            <person name="Orci L."/>
        </authorList>
    </citation>
    <scope>FUNCTION</scope>
    <scope>SUBCELLULAR LOCATION</scope>
</reference>
<reference key="13">
    <citation type="journal article" date="1995" name="J. Biol. Chem.">
        <title>Uncoupled packaging of targeting and cargo molecules during transport vesicle budding from the endoplasmic reticulum.</title>
        <authorList>
            <person name="Yeung T."/>
            <person name="Barlowe C."/>
            <person name="Schekman R.W."/>
        </authorList>
    </citation>
    <scope>FUNCTION</scope>
</reference>
<reference key="14">
    <citation type="journal article" date="1996" name="J. Biochem.">
        <title>Characterization of yeast sar1 temperature-sensitive mutants, which are defective in protein transport from the endoplasmic reticulum.</title>
        <authorList>
            <person name="Yamanushi T."/>
            <person name="Hirata A."/>
            <person name="Oka T."/>
            <person name="Nakano A."/>
        </authorList>
    </citation>
    <scope>MUTAGENESIS OF ASP-32; GLU-112 AND ASN-132</scope>
</reference>
<reference key="15">
    <citation type="journal article" date="1997" name="Proc. Natl. Acad. Sci. U.S.A.">
        <title>Selective packaging of cargo molecules into endoplasmic reticulum-derived COPII vesicles.</title>
        <authorList>
            <person name="Campbell J.L."/>
            <person name="Schekman R.W."/>
        </authorList>
    </citation>
    <scope>FUNCTION</scope>
</reference>
<reference key="16">
    <citation type="journal article" date="1998" name="Cell">
        <title>COPII-coated vesicle formation reconstituted with purified coat proteins and chemically defined liposomes.</title>
        <authorList>
            <person name="Matsuoka K."/>
            <person name="Orci L."/>
            <person name="Amherdt M."/>
            <person name="Bednarek S.Y."/>
            <person name="Hamamoto S."/>
            <person name="Schekman R.W."/>
            <person name="Yeung T."/>
        </authorList>
    </citation>
    <scope>SUBUNIT</scope>
    <scope>SUBCELLULAR LOCATION</scope>
</reference>
<reference key="17">
    <citation type="journal article" date="1998" name="J. Biochem.">
        <title>Activities of mutant Sar1 proteins in guanine nucleotide binding, GTP hydrolysis, and cell-free transport from the endoplasmic reticulum to the Golgi apparatus.</title>
        <authorList>
            <person name="Saito Y."/>
            <person name="Kimura K."/>
            <person name="Oka T."/>
            <person name="Nakano A."/>
        </authorList>
    </citation>
    <scope>FUNCTION</scope>
    <scope>CATALYTIC ACTIVITY</scope>
    <scope>MUTAGENESIS OF ASP-32; THR-54; HIS-77 AND GLU-112</scope>
</reference>
<reference key="18">
    <citation type="journal article" date="1998" name="Nature">
        <title>COPII-cargo interactions direct protein sorting into ER-derived transport vesicles.</title>
        <authorList>
            <person name="Kuehn M.J."/>
            <person name="Herrmann J.M."/>
            <person name="Schekman R.W."/>
        </authorList>
    </citation>
    <scope>FUNCTION</scope>
</reference>
<reference key="19">
    <citation type="journal article" date="1998" name="Science">
        <title>Nucleation of COPII vesicular coat complex by endoplasmic reticulum to Golgi vesicle SNAREs.</title>
        <authorList>
            <person name="Springer S."/>
            <person name="Schekman R.W."/>
        </authorList>
    </citation>
    <scope>INTERACTION WITH BET1; BOS1; SEC23 AND SEC24</scope>
</reference>
<reference key="20">
    <citation type="journal article" date="2000" name="Methods">
        <title>The use of liposomes to study COPII- and COPI-coated vesicle formation and membrane protein sorting.</title>
        <authorList>
            <person name="Matsuoka K."/>
            <person name="Schekman R.W."/>
        </authorList>
    </citation>
    <scope>FUNCTION</scope>
    <scope>SUBCELLULAR LOCATION</scope>
</reference>
<reference key="21">
    <citation type="journal article" date="2001" name="J. Biol. Chem.">
        <title>Distinct roles for the cytoplasmic tail sequences of Emp24p and Erv25p in transport between the endoplasmic reticulum and Golgi complex.</title>
        <authorList>
            <person name="Belden W.J."/>
            <person name="Barlowe C."/>
        </authorList>
    </citation>
    <scope>INTERACTION WITH EMP24 AND ERV25</scope>
</reference>
<reference key="22">
    <citation type="journal article" date="2001" name="Nat. Cell Biol.">
        <title>Dynamics of the COPII coat with GTP and stable analogues.</title>
        <authorList>
            <person name="Antonny B."/>
            <person name="Madden D.T."/>
            <person name="Hamamoto S."/>
            <person name="Orci L."/>
            <person name="Schekman R.W."/>
        </authorList>
    </citation>
    <scope>FUNCTION</scope>
    <scope>IDENTIFICATION IN THE COPII COAT</scope>
</reference>
<reference key="23">
    <citation type="journal article" date="2002" name="J. Cell Biol.">
        <title>Sec16p potentiates the action of COPII proteins to bud transport vesicles.</title>
        <authorList>
            <person name="Supek F."/>
            <person name="Madden D.T."/>
            <person name="Hamamoto S."/>
            <person name="Orci L."/>
            <person name="Schekman R.W."/>
        </authorList>
    </citation>
    <scope>SUBCELLULAR LOCATION</scope>
</reference>
<reference key="24">
    <citation type="journal article" date="2003" name="EMBO J.">
        <title>Activation of phospholipase D by the small GTPase Sar1p is required to support COPII assembly and ER export.</title>
        <authorList>
            <person name="Pathre P."/>
            <person name="Shome K."/>
            <person name="Blumental-Perry A."/>
            <person name="Bielli A."/>
            <person name="Haney C.J."/>
            <person name="Alber S."/>
            <person name="Watkins S.C."/>
            <person name="Romero G."/>
            <person name="Aridor M."/>
        </authorList>
    </citation>
    <scope>FUNCTION</scope>
    <scope>SUBCELLULAR LOCATION</scope>
</reference>
<reference key="25">
    <citation type="journal article" date="2003" name="EMBO Rep.">
        <title>Self-assembly of minimal COPII cages.</title>
        <authorList>
            <person name="Antonny B."/>
            <person name="Gounon P."/>
            <person name="Schekman R.W."/>
            <person name="Orci L."/>
        </authorList>
    </citation>
    <scope>STRUCTURE OF THE COPII COMPLEX</scope>
</reference>
<reference key="26">
    <citation type="journal article" date="2004" name="J. Biol. Chem.">
        <title>Reconstitution of coat protein complex II (COPII) vesicle formation from cargo-reconstituted proteoliposomes reveals the potential role of GTP hydrolysis by Sar1p in protein sorting.</title>
        <authorList>
            <person name="Sato K."/>
            <person name="Nakano A."/>
        </authorList>
    </citation>
    <scope>FUNCTION IN COPII COMPLEX ASSEMBLY</scope>
</reference>
<reference key="27">
    <citation type="journal article" date="2005" name="Mol. Cell. Biol.">
        <title>Immunoisolation of the yeast Golgi subcompartments and characterization of a novel membrane protein, Svp26, discovered in the Sed5-containing compartments.</title>
        <authorList>
            <person name="Inadome H."/>
            <person name="Noda Y."/>
            <person name="Adachi H."/>
            <person name="Yoda K."/>
        </authorList>
    </citation>
    <scope>SUBCELLULAR LOCATION</scope>
    <scope>IDENTIFICATION BY MASS SPECTROMETRY</scope>
</reference>
<reference key="28">
    <citation type="journal article" date="2005" name="Nat. Struct. Mol. Biol.">
        <title>Dissection of COPII subunit-cargo assembly and disassembly kinetics during Sar1p-GTP hydrolysis.</title>
        <authorList>
            <person name="Sato K."/>
            <person name="Nakano A."/>
        </authorList>
    </citation>
    <scope>FUNCTION IN COPII COMPLEX ASSEMBLY AND DISASSEMBLY</scope>
</reference>
<reference key="29">
    <citation type="journal article" date="2008" name="Mol. Cell. Proteomics">
        <title>A multidimensional chromatography technology for in-depth phosphoproteome analysis.</title>
        <authorList>
            <person name="Albuquerque C.P."/>
            <person name="Smolka M.B."/>
            <person name="Payne S.H."/>
            <person name="Bafna V."/>
            <person name="Eng J."/>
            <person name="Zhou H."/>
        </authorList>
    </citation>
    <scope>PHOSPHORYLATION [LARGE SCALE ANALYSIS] AT SER-157</scope>
    <scope>IDENTIFICATION BY MASS SPECTROMETRY [LARGE SCALE ANALYSIS]</scope>
</reference>
<reference key="30">
    <citation type="journal article" date="2009" name="Science">
        <title>Global analysis of Cdk1 substrate phosphorylation sites provides insights into evolution.</title>
        <authorList>
            <person name="Holt L.J."/>
            <person name="Tuch B.B."/>
            <person name="Villen J."/>
            <person name="Johnson A.D."/>
            <person name="Gygi S.P."/>
            <person name="Morgan D.O."/>
        </authorList>
    </citation>
    <scope>PHOSPHORYLATION [LARGE SCALE ANALYSIS] AT THR-155 AND SER-157</scope>
    <scope>IDENTIFICATION BY MASS SPECTROMETRY [LARGE SCALE ANALYSIS]</scope>
</reference>
<reference key="31">
    <citation type="journal article" date="2012" name="Proteomics">
        <title>Sites of ubiquitin attachment in Saccharomyces cerevisiae.</title>
        <authorList>
            <person name="Starita L.M."/>
            <person name="Lo R.S."/>
            <person name="Eng J.K."/>
            <person name="von Haller P.D."/>
            <person name="Fields S."/>
        </authorList>
    </citation>
    <scope>UBIQUITINATION [LARGE SCALE ANALYSIS] AT LYS-133</scope>
    <scope>IDENTIFICATION BY MASS SPECTROMETRY [LARGE SCALE ANALYSIS]</scope>
</reference>
<reference key="32">
    <citation type="journal article" date="2002" name="Nature">
        <title>Structure of the Sec23/24-Sar1 pre-budding complex of the COPII vesicle coat.</title>
        <authorList>
            <person name="Bi X."/>
            <person name="Corpina R.A."/>
            <person name="Goldberg J."/>
        </authorList>
    </citation>
    <scope>X-RAY CRYSTALLOGRAPHY (2.5 ANGSTROMS) IN COMPLEX WITH SEC23 AND A GTP ANALOG</scope>
</reference>
<gene>
    <name type="primary">SAR1</name>
    <name type="ordered locus">YPL218W</name>
</gene>
<name>SAR1_YEAST</name>
<keyword id="KW-0002">3D-structure</keyword>
<keyword id="KW-0968">Cytoplasmic vesicle</keyword>
<keyword id="KW-0256">Endoplasmic reticulum</keyword>
<keyword id="KW-0931">ER-Golgi transport</keyword>
<keyword id="KW-0333">Golgi apparatus</keyword>
<keyword id="KW-0342">GTP-binding</keyword>
<keyword id="KW-0378">Hydrolase</keyword>
<keyword id="KW-1017">Isopeptide bond</keyword>
<keyword id="KW-0472">Membrane</keyword>
<keyword id="KW-0547">Nucleotide-binding</keyword>
<keyword id="KW-0597">Phosphoprotein</keyword>
<keyword id="KW-0653">Protein transport</keyword>
<keyword id="KW-1185">Reference proteome</keyword>
<keyword id="KW-0813">Transport</keyword>
<keyword id="KW-0832">Ubl conjugation</keyword>